<gene>
    <name evidence="1" type="primary">syd</name>
    <name type="ordered locus">SPA2831</name>
</gene>
<sequence>MDELTAQALKAFTTRYCDAWQEKHGSWPLSEELYGVPSPCIISSTRDAVYWQPQPFEGEENVNAVERAFDIMVQPALHAFYTTQFAGDMPAQFADEKLTLLQTWSQDDFRRVQENLIGHLVTQKRLKLPPTLFIATQENELEVISVCNLSGEVIKETLGTRNRTVLAATLAEFLTQLNPLL</sequence>
<name>SYDP_SALPA</name>
<proteinExistence type="inferred from homology"/>
<accession>Q5PEK1</accession>
<feature type="chain" id="PRO_0000214141" description="Protein Syd">
    <location>
        <begin position="1"/>
        <end position="181"/>
    </location>
</feature>
<comment type="function">
    <text evidence="1">Interacts with the SecY protein in vivo. May bind preferentially to an uncomplexed state of SecY, thus functioning either as a chelating agent for excess SecY in the cell or as a regulatory factor that negatively controls the translocase function.</text>
</comment>
<comment type="subcellular location">
    <subcellularLocation>
        <location evidence="1">Cell inner membrane</location>
        <topology evidence="1">Peripheral membrane protein</topology>
        <orientation evidence="1">Cytoplasmic side</orientation>
    </subcellularLocation>
    <text evidence="1">Loosely associated with the cytoplasmic side of the inner membrane, probably via SecY.</text>
</comment>
<comment type="similarity">
    <text evidence="1">Belongs to the Syd family.</text>
</comment>
<organism>
    <name type="scientific">Salmonella paratyphi A (strain ATCC 9150 / SARB42)</name>
    <dbReference type="NCBI Taxonomy" id="295319"/>
    <lineage>
        <taxon>Bacteria</taxon>
        <taxon>Pseudomonadati</taxon>
        <taxon>Pseudomonadota</taxon>
        <taxon>Gammaproteobacteria</taxon>
        <taxon>Enterobacterales</taxon>
        <taxon>Enterobacteriaceae</taxon>
        <taxon>Salmonella</taxon>
    </lineage>
</organism>
<evidence type="ECO:0000255" key="1">
    <source>
        <dbReference type="HAMAP-Rule" id="MF_01104"/>
    </source>
</evidence>
<reference key="1">
    <citation type="journal article" date="2004" name="Nat. Genet.">
        <title>Comparison of genome degradation in Paratyphi A and Typhi, human-restricted serovars of Salmonella enterica that cause typhoid.</title>
        <authorList>
            <person name="McClelland M."/>
            <person name="Sanderson K.E."/>
            <person name="Clifton S.W."/>
            <person name="Latreille P."/>
            <person name="Porwollik S."/>
            <person name="Sabo A."/>
            <person name="Meyer R."/>
            <person name="Bieri T."/>
            <person name="Ozersky P."/>
            <person name="McLellan M."/>
            <person name="Harkins C.R."/>
            <person name="Wang C."/>
            <person name="Nguyen C."/>
            <person name="Berghoff A."/>
            <person name="Elliott G."/>
            <person name="Kohlberg S."/>
            <person name="Strong C."/>
            <person name="Du F."/>
            <person name="Carter J."/>
            <person name="Kremizki C."/>
            <person name="Layman D."/>
            <person name="Leonard S."/>
            <person name="Sun H."/>
            <person name="Fulton L."/>
            <person name="Nash W."/>
            <person name="Miner T."/>
            <person name="Minx P."/>
            <person name="Delehaunty K."/>
            <person name="Fronick C."/>
            <person name="Magrini V."/>
            <person name="Nhan M."/>
            <person name="Warren W."/>
            <person name="Florea L."/>
            <person name="Spieth J."/>
            <person name="Wilson R.K."/>
        </authorList>
    </citation>
    <scope>NUCLEOTIDE SEQUENCE [LARGE SCALE GENOMIC DNA]</scope>
    <source>
        <strain>ATCC 9150 / SARB42</strain>
    </source>
</reference>
<protein>
    <recommendedName>
        <fullName evidence="1">Protein Syd</fullName>
    </recommendedName>
</protein>
<keyword id="KW-0997">Cell inner membrane</keyword>
<keyword id="KW-1003">Cell membrane</keyword>
<keyword id="KW-0472">Membrane</keyword>
<dbReference type="EMBL" id="CP000026">
    <property type="protein sequence ID" value="AAV78679.1"/>
    <property type="molecule type" value="Genomic_DNA"/>
</dbReference>
<dbReference type="RefSeq" id="WP_000343990.1">
    <property type="nucleotide sequence ID" value="NC_006511.1"/>
</dbReference>
<dbReference type="SMR" id="Q5PEK1"/>
<dbReference type="KEGG" id="spt:SPA2831"/>
<dbReference type="HOGENOM" id="CLU_121866_0_0_6"/>
<dbReference type="Proteomes" id="UP000008185">
    <property type="component" value="Chromosome"/>
</dbReference>
<dbReference type="GO" id="GO:0009898">
    <property type="term" value="C:cytoplasmic side of plasma membrane"/>
    <property type="evidence" value="ECO:0007669"/>
    <property type="project" value="InterPro"/>
</dbReference>
<dbReference type="CDD" id="cd16323">
    <property type="entry name" value="Syd"/>
    <property type="match status" value="1"/>
</dbReference>
<dbReference type="Gene3D" id="3.40.1580.20">
    <property type="entry name" value="Syd protein"/>
    <property type="match status" value="1"/>
</dbReference>
<dbReference type="HAMAP" id="MF_01104">
    <property type="entry name" value="Syd"/>
    <property type="match status" value="1"/>
</dbReference>
<dbReference type="InterPro" id="IPR009948">
    <property type="entry name" value="Syd"/>
</dbReference>
<dbReference type="InterPro" id="IPR038228">
    <property type="entry name" value="Syd_sf"/>
</dbReference>
<dbReference type="NCBIfam" id="NF003439">
    <property type="entry name" value="PRK04968.1"/>
    <property type="match status" value="1"/>
</dbReference>
<dbReference type="Pfam" id="PF07348">
    <property type="entry name" value="Syd"/>
    <property type="match status" value="1"/>
</dbReference>